<feature type="chain" id="PRO_0000145698" description="Glyceraldehyde-3-phosphate dehydrogenase 2">
    <location>
        <begin position="1"/>
        <end position="341"/>
    </location>
</feature>
<feature type="active site" description="Nucleophile" evidence="2">
    <location>
        <position position="153"/>
    </location>
</feature>
<feature type="binding site" evidence="2">
    <location>
        <begin position="12"/>
        <end position="13"/>
    </location>
    <ligand>
        <name>NAD(+)</name>
        <dbReference type="ChEBI" id="CHEBI:57540"/>
    </ligand>
</feature>
<feature type="binding site" evidence="2">
    <location>
        <position position="78"/>
    </location>
    <ligand>
        <name>NAD(+)</name>
        <dbReference type="ChEBI" id="CHEBI:57540"/>
    </ligand>
</feature>
<feature type="binding site" evidence="2">
    <location>
        <position position="120"/>
    </location>
    <ligand>
        <name>NAD(+)</name>
        <dbReference type="ChEBI" id="CHEBI:57540"/>
    </ligand>
</feature>
<feature type="binding site" evidence="2">
    <location>
        <begin position="152"/>
        <end position="154"/>
    </location>
    <ligand>
        <name>D-glyceraldehyde 3-phosphate</name>
        <dbReference type="ChEBI" id="CHEBI:59776"/>
    </ligand>
</feature>
<feature type="binding site" evidence="2">
    <location>
        <position position="183"/>
    </location>
    <ligand>
        <name>D-glyceraldehyde 3-phosphate</name>
        <dbReference type="ChEBI" id="CHEBI:59776"/>
    </ligand>
</feature>
<feature type="binding site" evidence="2">
    <location>
        <position position="184"/>
    </location>
    <ligand>
        <name>NAD(+)</name>
        <dbReference type="ChEBI" id="CHEBI:57540"/>
    </ligand>
</feature>
<feature type="binding site" evidence="1">
    <location>
        <position position="198"/>
    </location>
    <ligand>
        <name>D-glyceraldehyde 3-phosphate</name>
        <dbReference type="ChEBI" id="CHEBI:59776"/>
    </ligand>
</feature>
<feature type="binding site" evidence="2">
    <location>
        <begin position="211"/>
        <end position="212"/>
    </location>
    <ligand>
        <name>D-glyceraldehyde 3-phosphate</name>
        <dbReference type="ChEBI" id="CHEBI:59776"/>
    </ligand>
</feature>
<feature type="binding site" evidence="2">
    <location>
        <position position="234"/>
    </location>
    <ligand>
        <name>D-glyceraldehyde 3-phosphate</name>
        <dbReference type="ChEBI" id="CHEBI:59776"/>
    </ligand>
</feature>
<feature type="binding site" evidence="2">
    <location>
        <position position="313"/>
    </location>
    <ligand>
        <name>NAD(+)</name>
        <dbReference type="ChEBI" id="CHEBI:57540"/>
    </ligand>
</feature>
<feature type="site" description="Activates thiol group during catalysis" evidence="2">
    <location>
        <position position="180"/>
    </location>
</feature>
<protein>
    <recommendedName>
        <fullName evidence="2">Glyceraldehyde-3-phosphate dehydrogenase 2</fullName>
        <shortName evidence="2">GAPDH 2</shortName>
        <ecNumber evidence="2">1.2.1.12</ecNumber>
    </recommendedName>
    <alternativeName>
        <fullName evidence="2">NAD-dependent glyceraldehyde-3-phosphate dehydrogenase</fullName>
    </alternativeName>
</protein>
<gene>
    <name type="primary">gapA2</name>
    <name type="synonym">gapB</name>
    <name type="ordered locus">SERP1250</name>
</gene>
<sequence>MATNIAINGMGRIGRMVLRIALNNKNLNVKAINASYPPETIAHLLNYDTTHGVYDKKVEPIESGIKVNGHEIKLLSDRNPENLPWNEMDIDVVIEATGKFNHGDKAVAHINAGAKKVLLTGPSKGGDVQMIVKGVNDNQLDIDTYDIFSNASCTTNCIGPVAKVLNDKFGIINGLMTTVHAITNDQKNIDNPHKDLRRARSCNESIIPTSTGAAKALKEVLPEVEGKLHGMALRVPTKNVSLVDLVVDLEQNVTVTQVNDAFKNADLSGVLDVEEAPLVSVDFNTNPHSAIIDSQSTMVMGQNKVKVIAWYDNEWGYSNRVVEVADKIGQLIDDKAMVKAI</sequence>
<name>G3P2_STAEQ</name>
<reference key="1">
    <citation type="journal article" date="2005" name="J. Bacteriol.">
        <title>Insights on evolution of virulence and resistance from the complete genome analysis of an early methicillin-resistant Staphylococcus aureus strain and a biofilm-producing methicillin-resistant Staphylococcus epidermidis strain.</title>
        <authorList>
            <person name="Gill S.R."/>
            <person name="Fouts D.E."/>
            <person name="Archer G.L."/>
            <person name="Mongodin E.F."/>
            <person name="DeBoy R.T."/>
            <person name="Ravel J."/>
            <person name="Paulsen I.T."/>
            <person name="Kolonay J.F."/>
            <person name="Brinkac L.M."/>
            <person name="Beanan M.J."/>
            <person name="Dodson R.J."/>
            <person name="Daugherty S.C."/>
            <person name="Madupu R."/>
            <person name="Angiuoli S.V."/>
            <person name="Durkin A.S."/>
            <person name="Haft D.H."/>
            <person name="Vamathevan J.J."/>
            <person name="Khouri H."/>
            <person name="Utterback T.R."/>
            <person name="Lee C."/>
            <person name="Dimitrov G."/>
            <person name="Jiang L."/>
            <person name="Qin H."/>
            <person name="Weidman J."/>
            <person name="Tran K."/>
            <person name="Kang K.H."/>
            <person name="Hance I.R."/>
            <person name="Nelson K.E."/>
            <person name="Fraser C.M."/>
        </authorList>
    </citation>
    <scope>NUCLEOTIDE SEQUENCE [LARGE SCALE GENOMIC DNA]</scope>
    <source>
        <strain>ATCC 35984 / DSM 28319 / BCRC 17069 / CCUG 31568 / BM 3577 / RP62A</strain>
    </source>
</reference>
<accession>Q5HNL7</accession>
<dbReference type="EC" id="1.2.1.12" evidence="2"/>
<dbReference type="EMBL" id="CP000029">
    <property type="protein sequence ID" value="AAW54615.1"/>
    <property type="molecule type" value="Genomic_DNA"/>
</dbReference>
<dbReference type="SMR" id="Q5HNL7"/>
<dbReference type="STRING" id="176279.SERP1250"/>
<dbReference type="KEGG" id="ser:SERP1250"/>
<dbReference type="eggNOG" id="COG0057">
    <property type="taxonomic scope" value="Bacteria"/>
</dbReference>
<dbReference type="HOGENOM" id="CLU_030140_0_2_9"/>
<dbReference type="UniPathway" id="UPA00109">
    <property type="reaction ID" value="UER00184"/>
</dbReference>
<dbReference type="Proteomes" id="UP000000531">
    <property type="component" value="Chromosome"/>
</dbReference>
<dbReference type="GO" id="GO:0005737">
    <property type="term" value="C:cytoplasm"/>
    <property type="evidence" value="ECO:0007669"/>
    <property type="project" value="UniProtKB-SubCell"/>
</dbReference>
<dbReference type="GO" id="GO:0004365">
    <property type="term" value="F:glyceraldehyde-3-phosphate dehydrogenase (NAD+) (phosphorylating) activity"/>
    <property type="evidence" value="ECO:0000250"/>
    <property type="project" value="UniProtKB"/>
</dbReference>
<dbReference type="GO" id="GO:0051287">
    <property type="term" value="F:NAD binding"/>
    <property type="evidence" value="ECO:0000250"/>
    <property type="project" value="UniProtKB"/>
</dbReference>
<dbReference type="GO" id="GO:0050661">
    <property type="term" value="F:NADP binding"/>
    <property type="evidence" value="ECO:0007669"/>
    <property type="project" value="InterPro"/>
</dbReference>
<dbReference type="GO" id="GO:0006006">
    <property type="term" value="P:glucose metabolic process"/>
    <property type="evidence" value="ECO:0007669"/>
    <property type="project" value="InterPro"/>
</dbReference>
<dbReference type="GO" id="GO:0006096">
    <property type="term" value="P:glycolytic process"/>
    <property type="evidence" value="ECO:0007669"/>
    <property type="project" value="UniProtKB-UniPathway"/>
</dbReference>
<dbReference type="CDD" id="cd18126">
    <property type="entry name" value="GAPDH_I_C"/>
    <property type="match status" value="1"/>
</dbReference>
<dbReference type="CDD" id="cd05214">
    <property type="entry name" value="GAPDH_I_N"/>
    <property type="match status" value="1"/>
</dbReference>
<dbReference type="FunFam" id="3.30.360.10:FF:000002">
    <property type="entry name" value="Glyceraldehyde-3-phosphate dehydrogenase"/>
    <property type="match status" value="1"/>
</dbReference>
<dbReference type="FunFam" id="3.40.50.720:FF:000001">
    <property type="entry name" value="Glyceraldehyde-3-phosphate dehydrogenase"/>
    <property type="match status" value="1"/>
</dbReference>
<dbReference type="Gene3D" id="3.30.360.10">
    <property type="entry name" value="Dihydrodipicolinate Reductase, domain 2"/>
    <property type="match status" value="1"/>
</dbReference>
<dbReference type="Gene3D" id="3.40.50.720">
    <property type="entry name" value="NAD(P)-binding Rossmann-like Domain"/>
    <property type="match status" value="1"/>
</dbReference>
<dbReference type="InterPro" id="IPR020831">
    <property type="entry name" value="GlycerAld/Erythrose_P_DH"/>
</dbReference>
<dbReference type="InterPro" id="IPR020830">
    <property type="entry name" value="GlycerAld_3-P_DH_AS"/>
</dbReference>
<dbReference type="InterPro" id="IPR020829">
    <property type="entry name" value="GlycerAld_3-P_DH_cat"/>
</dbReference>
<dbReference type="InterPro" id="IPR020828">
    <property type="entry name" value="GlycerAld_3-P_DH_NAD(P)-bd"/>
</dbReference>
<dbReference type="InterPro" id="IPR006424">
    <property type="entry name" value="Glyceraldehyde-3-P_DH_1"/>
</dbReference>
<dbReference type="InterPro" id="IPR036291">
    <property type="entry name" value="NAD(P)-bd_dom_sf"/>
</dbReference>
<dbReference type="NCBIfam" id="TIGR01534">
    <property type="entry name" value="GAPDH-I"/>
    <property type="match status" value="1"/>
</dbReference>
<dbReference type="PANTHER" id="PTHR43148">
    <property type="entry name" value="GLYCERALDEHYDE-3-PHOSPHATE DEHYDROGENASE 2"/>
    <property type="match status" value="1"/>
</dbReference>
<dbReference type="Pfam" id="PF02800">
    <property type="entry name" value="Gp_dh_C"/>
    <property type="match status" value="1"/>
</dbReference>
<dbReference type="Pfam" id="PF00044">
    <property type="entry name" value="Gp_dh_N"/>
    <property type="match status" value="1"/>
</dbReference>
<dbReference type="PIRSF" id="PIRSF000149">
    <property type="entry name" value="GAP_DH"/>
    <property type="match status" value="1"/>
</dbReference>
<dbReference type="PRINTS" id="PR00078">
    <property type="entry name" value="G3PDHDRGNASE"/>
</dbReference>
<dbReference type="SMART" id="SM00846">
    <property type="entry name" value="Gp_dh_N"/>
    <property type="match status" value="1"/>
</dbReference>
<dbReference type="SUPFAM" id="SSF55347">
    <property type="entry name" value="Glyceraldehyde-3-phosphate dehydrogenase-like, C-terminal domain"/>
    <property type="match status" value="1"/>
</dbReference>
<dbReference type="SUPFAM" id="SSF51735">
    <property type="entry name" value="NAD(P)-binding Rossmann-fold domains"/>
    <property type="match status" value="1"/>
</dbReference>
<dbReference type="PROSITE" id="PS00071">
    <property type="entry name" value="GAPDH"/>
    <property type="match status" value="1"/>
</dbReference>
<organism>
    <name type="scientific">Staphylococcus epidermidis (strain ATCC 35984 / DSM 28319 / BCRC 17069 / CCUG 31568 / BM 3577 / RP62A)</name>
    <dbReference type="NCBI Taxonomy" id="176279"/>
    <lineage>
        <taxon>Bacteria</taxon>
        <taxon>Bacillati</taxon>
        <taxon>Bacillota</taxon>
        <taxon>Bacilli</taxon>
        <taxon>Bacillales</taxon>
        <taxon>Staphylococcaceae</taxon>
        <taxon>Staphylococcus</taxon>
    </lineage>
</organism>
<comment type="function">
    <text evidence="2">Catalyzes the oxidative phosphorylation of glyceraldehyde 3-phosphate (G3P) to 1,3-bisphosphoglycerate (BPG) using the cofactor NAD. The first reaction step involves the formation of a hemiacetal intermediate between G3P and a cysteine residue, and this hemiacetal intermediate is then oxidized to a thioester, with concomitant reduction of NAD to NADH. The reduced NADH is then exchanged with the second NAD, and the thioester is attacked by a nucleophilic inorganic phosphate to produce BPG.</text>
</comment>
<comment type="catalytic activity">
    <reaction evidence="2">
        <text>D-glyceraldehyde 3-phosphate + phosphate + NAD(+) = (2R)-3-phospho-glyceroyl phosphate + NADH + H(+)</text>
        <dbReference type="Rhea" id="RHEA:10300"/>
        <dbReference type="ChEBI" id="CHEBI:15378"/>
        <dbReference type="ChEBI" id="CHEBI:43474"/>
        <dbReference type="ChEBI" id="CHEBI:57540"/>
        <dbReference type="ChEBI" id="CHEBI:57604"/>
        <dbReference type="ChEBI" id="CHEBI:57945"/>
        <dbReference type="ChEBI" id="CHEBI:59776"/>
        <dbReference type="EC" id="1.2.1.12"/>
    </reaction>
</comment>
<comment type="pathway">
    <text evidence="3">Carbohydrate degradation; glycolysis; pyruvate from D-glyceraldehyde 3-phosphate: step 1/5.</text>
</comment>
<comment type="subunit">
    <text evidence="2">Homotetramer.</text>
</comment>
<comment type="subcellular location">
    <subcellularLocation>
        <location evidence="3">Cytoplasm</location>
    </subcellularLocation>
</comment>
<comment type="similarity">
    <text evidence="3">Belongs to the glyceraldehyde-3-phosphate dehydrogenase family.</text>
</comment>
<keyword id="KW-0963">Cytoplasm</keyword>
<keyword id="KW-0324">Glycolysis</keyword>
<keyword id="KW-0520">NAD</keyword>
<keyword id="KW-0547">Nucleotide-binding</keyword>
<keyword id="KW-0560">Oxidoreductase</keyword>
<keyword id="KW-1185">Reference proteome</keyword>
<evidence type="ECO:0000250" key="1">
    <source>
        <dbReference type="UniProtKB" id="P00362"/>
    </source>
</evidence>
<evidence type="ECO:0000250" key="2">
    <source>
        <dbReference type="UniProtKB" id="Q6GIL8"/>
    </source>
</evidence>
<evidence type="ECO:0000305" key="3"/>
<proteinExistence type="inferred from homology"/>